<sequence length="439" mass="49861">MLDIKYLRNNRDEANQRLIDRNVEDGVLDKLLADDEKRRSLIRKAEQLKAKRNQVSDQIGAAKRAKDNSAAQKAISDMQTVAGQIKDLDKQLSAIEESVHTQAAHLPNLADPRVPVGPDDSYNVEQRKWQPTDLQGRPAAFSKTPTWLKAHFEIGEDLGILDFQRGVKVSGARFLYYVGAGARLERAVYNFMLDEHRREGYTELLTPYMVTNESMYATGQFPKFVDDAYEVGKNQSMTMIPTAEVALVNWRRDEVLDESELPLYITALSPAFRQEAGAAGKDTRGLIRLHQFNKVEMVKFTKPEDSYNELEKMTVDAENILQKLELPYHVIRLSTGDMGFGSAMTYDLEVWFPTQDKYREISSVSNDEDFQARRGHIQYRDSKTGKLRFVHTLNGSGLAVGRTVAAILENYQNEDGTITIPEVLRPYFGEDKISKENAR</sequence>
<feature type="chain" id="PRO_1000019754" description="Serine--tRNA ligase">
    <location>
        <begin position="1"/>
        <end position="439"/>
    </location>
</feature>
<feature type="binding site" evidence="1">
    <location>
        <begin position="242"/>
        <end position="244"/>
    </location>
    <ligand>
        <name>L-serine</name>
        <dbReference type="ChEBI" id="CHEBI:33384"/>
    </ligand>
</feature>
<feature type="binding site" evidence="1">
    <location>
        <begin position="273"/>
        <end position="275"/>
    </location>
    <ligand>
        <name>ATP</name>
        <dbReference type="ChEBI" id="CHEBI:30616"/>
    </ligand>
</feature>
<feature type="binding site" evidence="1">
    <location>
        <position position="296"/>
    </location>
    <ligand>
        <name>L-serine</name>
        <dbReference type="ChEBI" id="CHEBI:33384"/>
    </ligand>
</feature>
<feature type="binding site" evidence="1">
    <location>
        <begin position="360"/>
        <end position="363"/>
    </location>
    <ligand>
        <name>ATP</name>
        <dbReference type="ChEBI" id="CHEBI:30616"/>
    </ligand>
</feature>
<feature type="binding site" evidence="1">
    <location>
        <position position="396"/>
    </location>
    <ligand>
        <name>L-serine</name>
        <dbReference type="ChEBI" id="CHEBI:33384"/>
    </ligand>
</feature>
<reference key="1">
    <citation type="journal article" date="2006" name="Proc. Natl. Acad. Sci. U.S.A.">
        <title>Comparative genomics of the lactic acid bacteria.</title>
        <authorList>
            <person name="Makarova K.S."/>
            <person name="Slesarev A."/>
            <person name="Wolf Y.I."/>
            <person name="Sorokin A."/>
            <person name="Mirkin B."/>
            <person name="Koonin E.V."/>
            <person name="Pavlov A."/>
            <person name="Pavlova N."/>
            <person name="Karamychev V."/>
            <person name="Polouchine N."/>
            <person name="Shakhova V."/>
            <person name="Grigoriev I."/>
            <person name="Lou Y."/>
            <person name="Rohksar D."/>
            <person name="Lucas S."/>
            <person name="Huang K."/>
            <person name="Goodstein D.M."/>
            <person name="Hawkins T."/>
            <person name="Plengvidhya V."/>
            <person name="Welker D."/>
            <person name="Hughes J."/>
            <person name="Goh Y."/>
            <person name="Benson A."/>
            <person name="Baldwin K."/>
            <person name="Lee J.-H."/>
            <person name="Diaz-Muniz I."/>
            <person name="Dosti B."/>
            <person name="Smeianov V."/>
            <person name="Wechter W."/>
            <person name="Barabote R."/>
            <person name="Lorca G."/>
            <person name="Altermann E."/>
            <person name="Barrangou R."/>
            <person name="Ganesan B."/>
            <person name="Xie Y."/>
            <person name="Rawsthorne H."/>
            <person name="Tamir D."/>
            <person name="Parker C."/>
            <person name="Breidt F."/>
            <person name="Broadbent J.R."/>
            <person name="Hutkins R."/>
            <person name="O'Sullivan D."/>
            <person name="Steele J."/>
            <person name="Unlu G."/>
            <person name="Saier M.H. Jr."/>
            <person name="Klaenhammer T."/>
            <person name="Richardson P."/>
            <person name="Kozyavkin S."/>
            <person name="Weimer B.C."/>
            <person name="Mills D.A."/>
        </authorList>
    </citation>
    <scope>NUCLEOTIDE SEQUENCE [LARGE SCALE GENOMIC DNA]</scope>
    <source>
        <strain>ATCC BAA-331 / PSU-1</strain>
    </source>
</reference>
<keyword id="KW-0030">Aminoacyl-tRNA synthetase</keyword>
<keyword id="KW-0067">ATP-binding</keyword>
<keyword id="KW-0963">Cytoplasm</keyword>
<keyword id="KW-0436">Ligase</keyword>
<keyword id="KW-0547">Nucleotide-binding</keyword>
<keyword id="KW-0648">Protein biosynthesis</keyword>
<keyword id="KW-1185">Reference proteome</keyword>
<gene>
    <name evidence="1" type="primary">serS</name>
    <name type="ordered locus">OEOE_0440</name>
</gene>
<organism>
    <name type="scientific">Oenococcus oeni (strain ATCC BAA-331 / PSU-1)</name>
    <dbReference type="NCBI Taxonomy" id="203123"/>
    <lineage>
        <taxon>Bacteria</taxon>
        <taxon>Bacillati</taxon>
        <taxon>Bacillota</taxon>
        <taxon>Bacilli</taxon>
        <taxon>Lactobacillales</taxon>
        <taxon>Lactobacillaceae</taxon>
        <taxon>Oenococcus</taxon>
    </lineage>
</organism>
<name>SYS_OENOB</name>
<accession>Q04GM3</accession>
<dbReference type="EC" id="6.1.1.11" evidence="1"/>
<dbReference type="EMBL" id="CP000411">
    <property type="protein sequence ID" value="ABJ56399.1"/>
    <property type="molecule type" value="Genomic_DNA"/>
</dbReference>
<dbReference type="RefSeq" id="WP_002818240.1">
    <property type="nucleotide sequence ID" value="NC_008528.1"/>
</dbReference>
<dbReference type="SMR" id="Q04GM3"/>
<dbReference type="STRING" id="203123.OEOE_0440"/>
<dbReference type="GeneID" id="75065234"/>
<dbReference type="KEGG" id="ooe:OEOE_0440"/>
<dbReference type="eggNOG" id="COG0172">
    <property type="taxonomic scope" value="Bacteria"/>
</dbReference>
<dbReference type="HOGENOM" id="CLU_023797_1_1_9"/>
<dbReference type="UniPathway" id="UPA00906">
    <property type="reaction ID" value="UER00895"/>
</dbReference>
<dbReference type="Proteomes" id="UP000000774">
    <property type="component" value="Chromosome"/>
</dbReference>
<dbReference type="GO" id="GO:0005737">
    <property type="term" value="C:cytoplasm"/>
    <property type="evidence" value="ECO:0007669"/>
    <property type="project" value="UniProtKB-SubCell"/>
</dbReference>
<dbReference type="GO" id="GO:0005524">
    <property type="term" value="F:ATP binding"/>
    <property type="evidence" value="ECO:0007669"/>
    <property type="project" value="UniProtKB-UniRule"/>
</dbReference>
<dbReference type="GO" id="GO:0140096">
    <property type="term" value="F:catalytic activity, acting on a protein"/>
    <property type="evidence" value="ECO:0007669"/>
    <property type="project" value="UniProtKB-ARBA"/>
</dbReference>
<dbReference type="GO" id="GO:0004828">
    <property type="term" value="F:serine-tRNA ligase activity"/>
    <property type="evidence" value="ECO:0007669"/>
    <property type="project" value="UniProtKB-UniRule"/>
</dbReference>
<dbReference type="GO" id="GO:0016740">
    <property type="term" value="F:transferase activity"/>
    <property type="evidence" value="ECO:0007669"/>
    <property type="project" value="UniProtKB-ARBA"/>
</dbReference>
<dbReference type="GO" id="GO:0016260">
    <property type="term" value="P:selenocysteine biosynthetic process"/>
    <property type="evidence" value="ECO:0007669"/>
    <property type="project" value="UniProtKB-UniRule"/>
</dbReference>
<dbReference type="GO" id="GO:0006434">
    <property type="term" value="P:seryl-tRNA aminoacylation"/>
    <property type="evidence" value="ECO:0007669"/>
    <property type="project" value="UniProtKB-UniRule"/>
</dbReference>
<dbReference type="CDD" id="cd00770">
    <property type="entry name" value="SerRS_core"/>
    <property type="match status" value="1"/>
</dbReference>
<dbReference type="Gene3D" id="3.30.930.10">
    <property type="entry name" value="Bira Bifunctional Protein, Domain 2"/>
    <property type="match status" value="1"/>
</dbReference>
<dbReference type="Gene3D" id="1.10.287.40">
    <property type="entry name" value="Serine-tRNA synthetase, tRNA binding domain"/>
    <property type="match status" value="1"/>
</dbReference>
<dbReference type="HAMAP" id="MF_00176">
    <property type="entry name" value="Ser_tRNA_synth_type1"/>
    <property type="match status" value="1"/>
</dbReference>
<dbReference type="InterPro" id="IPR002314">
    <property type="entry name" value="aa-tRNA-synt_IIb"/>
</dbReference>
<dbReference type="InterPro" id="IPR006195">
    <property type="entry name" value="aa-tRNA-synth_II"/>
</dbReference>
<dbReference type="InterPro" id="IPR045864">
    <property type="entry name" value="aa-tRNA-synth_II/BPL/LPL"/>
</dbReference>
<dbReference type="InterPro" id="IPR002317">
    <property type="entry name" value="Ser-tRNA-ligase_type_1"/>
</dbReference>
<dbReference type="InterPro" id="IPR015866">
    <property type="entry name" value="Ser-tRNA-synth_1_N"/>
</dbReference>
<dbReference type="InterPro" id="IPR042103">
    <property type="entry name" value="SerRS_1_N_sf"/>
</dbReference>
<dbReference type="InterPro" id="IPR033729">
    <property type="entry name" value="SerRS_core"/>
</dbReference>
<dbReference type="InterPro" id="IPR010978">
    <property type="entry name" value="tRNA-bd_arm"/>
</dbReference>
<dbReference type="NCBIfam" id="TIGR00414">
    <property type="entry name" value="serS"/>
    <property type="match status" value="1"/>
</dbReference>
<dbReference type="PANTHER" id="PTHR43697:SF1">
    <property type="entry name" value="SERINE--TRNA LIGASE"/>
    <property type="match status" value="1"/>
</dbReference>
<dbReference type="PANTHER" id="PTHR43697">
    <property type="entry name" value="SERYL-TRNA SYNTHETASE"/>
    <property type="match status" value="1"/>
</dbReference>
<dbReference type="Pfam" id="PF02403">
    <property type="entry name" value="Seryl_tRNA_N"/>
    <property type="match status" value="1"/>
</dbReference>
<dbReference type="Pfam" id="PF00587">
    <property type="entry name" value="tRNA-synt_2b"/>
    <property type="match status" value="1"/>
</dbReference>
<dbReference type="PIRSF" id="PIRSF001529">
    <property type="entry name" value="Ser-tRNA-synth_IIa"/>
    <property type="match status" value="1"/>
</dbReference>
<dbReference type="PRINTS" id="PR00981">
    <property type="entry name" value="TRNASYNTHSER"/>
</dbReference>
<dbReference type="SUPFAM" id="SSF55681">
    <property type="entry name" value="Class II aaRS and biotin synthetases"/>
    <property type="match status" value="1"/>
</dbReference>
<dbReference type="SUPFAM" id="SSF46589">
    <property type="entry name" value="tRNA-binding arm"/>
    <property type="match status" value="1"/>
</dbReference>
<dbReference type="PROSITE" id="PS50862">
    <property type="entry name" value="AA_TRNA_LIGASE_II"/>
    <property type="match status" value="1"/>
</dbReference>
<proteinExistence type="inferred from homology"/>
<protein>
    <recommendedName>
        <fullName evidence="1">Serine--tRNA ligase</fullName>
        <ecNumber evidence="1">6.1.1.11</ecNumber>
    </recommendedName>
    <alternativeName>
        <fullName evidence="1">Seryl-tRNA synthetase</fullName>
        <shortName evidence="1">SerRS</shortName>
    </alternativeName>
    <alternativeName>
        <fullName evidence="1">Seryl-tRNA(Ser/Sec) synthetase</fullName>
    </alternativeName>
</protein>
<evidence type="ECO:0000255" key="1">
    <source>
        <dbReference type="HAMAP-Rule" id="MF_00176"/>
    </source>
</evidence>
<comment type="function">
    <text evidence="1">Catalyzes the attachment of serine to tRNA(Ser). Is also able to aminoacylate tRNA(Sec) with serine, to form the misacylated tRNA L-seryl-tRNA(Sec), which will be further converted into selenocysteinyl-tRNA(Sec).</text>
</comment>
<comment type="catalytic activity">
    <reaction evidence="1">
        <text>tRNA(Ser) + L-serine + ATP = L-seryl-tRNA(Ser) + AMP + diphosphate + H(+)</text>
        <dbReference type="Rhea" id="RHEA:12292"/>
        <dbReference type="Rhea" id="RHEA-COMP:9669"/>
        <dbReference type="Rhea" id="RHEA-COMP:9703"/>
        <dbReference type="ChEBI" id="CHEBI:15378"/>
        <dbReference type="ChEBI" id="CHEBI:30616"/>
        <dbReference type="ChEBI" id="CHEBI:33019"/>
        <dbReference type="ChEBI" id="CHEBI:33384"/>
        <dbReference type="ChEBI" id="CHEBI:78442"/>
        <dbReference type="ChEBI" id="CHEBI:78533"/>
        <dbReference type="ChEBI" id="CHEBI:456215"/>
        <dbReference type="EC" id="6.1.1.11"/>
    </reaction>
</comment>
<comment type="catalytic activity">
    <reaction evidence="1">
        <text>tRNA(Sec) + L-serine + ATP = L-seryl-tRNA(Sec) + AMP + diphosphate + H(+)</text>
        <dbReference type="Rhea" id="RHEA:42580"/>
        <dbReference type="Rhea" id="RHEA-COMP:9742"/>
        <dbReference type="Rhea" id="RHEA-COMP:10128"/>
        <dbReference type="ChEBI" id="CHEBI:15378"/>
        <dbReference type="ChEBI" id="CHEBI:30616"/>
        <dbReference type="ChEBI" id="CHEBI:33019"/>
        <dbReference type="ChEBI" id="CHEBI:33384"/>
        <dbReference type="ChEBI" id="CHEBI:78442"/>
        <dbReference type="ChEBI" id="CHEBI:78533"/>
        <dbReference type="ChEBI" id="CHEBI:456215"/>
        <dbReference type="EC" id="6.1.1.11"/>
    </reaction>
</comment>
<comment type="pathway">
    <text evidence="1">Aminoacyl-tRNA biosynthesis; selenocysteinyl-tRNA(Sec) biosynthesis; L-seryl-tRNA(Sec) from L-serine and tRNA(Sec): step 1/1.</text>
</comment>
<comment type="subunit">
    <text evidence="1">Homodimer. The tRNA molecule binds across the dimer.</text>
</comment>
<comment type="subcellular location">
    <subcellularLocation>
        <location evidence="1">Cytoplasm</location>
    </subcellularLocation>
</comment>
<comment type="domain">
    <text evidence="1">Consists of two distinct domains, a catalytic core and a N-terminal extension that is involved in tRNA binding.</text>
</comment>
<comment type="similarity">
    <text evidence="1">Belongs to the class-II aminoacyl-tRNA synthetase family. Type-1 seryl-tRNA synthetase subfamily.</text>
</comment>